<name>GLPD_STAEQ</name>
<feature type="chain" id="PRO_0000270065" description="Aerobic glycerol-3-phosphate dehydrogenase">
    <location>
        <begin position="1"/>
        <end position="557"/>
    </location>
</feature>
<feature type="binding site" evidence="2">
    <location>
        <begin position="21"/>
        <end position="49"/>
    </location>
    <ligand>
        <name>FAD</name>
        <dbReference type="ChEBI" id="CHEBI:57692"/>
    </ligand>
</feature>
<organism>
    <name type="scientific">Staphylococcus epidermidis (strain ATCC 35984 / DSM 28319 / BCRC 17069 / CCUG 31568 / BM 3577 / RP62A)</name>
    <dbReference type="NCBI Taxonomy" id="176279"/>
    <lineage>
        <taxon>Bacteria</taxon>
        <taxon>Bacillati</taxon>
        <taxon>Bacillota</taxon>
        <taxon>Bacilli</taxon>
        <taxon>Bacillales</taxon>
        <taxon>Staphylococcaceae</taxon>
        <taxon>Staphylococcus</taxon>
    </lineage>
</organism>
<proteinExistence type="inferred from homology"/>
<keyword id="KW-0963">Cytoplasm</keyword>
<keyword id="KW-0274">FAD</keyword>
<keyword id="KW-0285">Flavoprotein</keyword>
<keyword id="KW-0319">Glycerol metabolism</keyword>
<keyword id="KW-0560">Oxidoreductase</keyword>
<keyword id="KW-1185">Reference proteome</keyword>
<sequence length="557" mass="62276">MSLSTLKRDHIKKNLRDTEYDVVIVGGGITGAGIALDASNRGMKVALVEMQDFAQGTSSRSTKLVHGGLRYLKQLQVGVVAETGKERAIVYENGPHVTTPEWMLLPMHKGGTFGKFSTSIGLAMYDRLAGVKKSERKKMLSKQETLNKEPLVKRDGLKGGGYYVEYRTDDARLTIEVMKKAAENGAEILNYTKSEHFTYDSNKKVNGIEVLDMIDGETYAIKAKKVINASGPWVDEVRSGDYARNNKQLRLTKGVHVVIDQSKFPLGQAVYFDTEKDGRMIFAIPREGKAYVGTTDTFYDNEKATPLTTQEDRDYLINAINYMFPTVNVKDEDIESTWAGIRPLILEKGKDPSEISRKDEVWEGESGLLTIAGGKLTGYRHMALEIVDLLAKRLKQEYGLKFESCATKNLKISGGDVGGSKNFEHFVEQKVDAAKGFGIDEDVARRLASKYGSNVDQLFNIAQTAPYHDSKLPLEIYVELVYSIQQEMVYKPTDFLVRRSGKLYFNIQDVLDYKNAVIDVMADMLNYSETQKEAYTEEVEVAIDEARTGNDQPATKA</sequence>
<accession>Q5HPP0</accession>
<dbReference type="EC" id="1.1.5.3"/>
<dbReference type="EMBL" id="CP000029">
    <property type="protein sequence ID" value="AAW54267.1"/>
    <property type="molecule type" value="Genomic_DNA"/>
</dbReference>
<dbReference type="RefSeq" id="WP_002439581.1">
    <property type="nucleotide sequence ID" value="NC_002976.3"/>
</dbReference>
<dbReference type="SMR" id="Q5HPP0"/>
<dbReference type="STRING" id="176279.SERP0868"/>
<dbReference type="KEGG" id="ser:SERP0868"/>
<dbReference type="eggNOG" id="COG0578">
    <property type="taxonomic scope" value="Bacteria"/>
</dbReference>
<dbReference type="HOGENOM" id="CLU_015740_5_2_9"/>
<dbReference type="UniPathway" id="UPA00618">
    <property type="reaction ID" value="UER00674"/>
</dbReference>
<dbReference type="Proteomes" id="UP000000531">
    <property type="component" value="Chromosome"/>
</dbReference>
<dbReference type="GO" id="GO:0005737">
    <property type="term" value="C:cytoplasm"/>
    <property type="evidence" value="ECO:0007669"/>
    <property type="project" value="UniProtKB-SubCell"/>
</dbReference>
<dbReference type="GO" id="GO:0004368">
    <property type="term" value="F:glycerol-3-phosphate dehydrogenase (quinone) activity"/>
    <property type="evidence" value="ECO:0007669"/>
    <property type="project" value="UniProtKB-EC"/>
</dbReference>
<dbReference type="GO" id="GO:0019563">
    <property type="term" value="P:glycerol catabolic process"/>
    <property type="evidence" value="ECO:0007669"/>
    <property type="project" value="UniProtKB-UniPathway"/>
</dbReference>
<dbReference type="GO" id="GO:0046168">
    <property type="term" value="P:glycerol-3-phosphate catabolic process"/>
    <property type="evidence" value="ECO:0007669"/>
    <property type="project" value="TreeGrafter"/>
</dbReference>
<dbReference type="Gene3D" id="1.10.8.870">
    <property type="entry name" value="Alpha-glycerophosphate oxidase, cap domain"/>
    <property type="match status" value="1"/>
</dbReference>
<dbReference type="Gene3D" id="3.30.9.10">
    <property type="entry name" value="D-Amino Acid Oxidase, subunit A, domain 2"/>
    <property type="match status" value="1"/>
</dbReference>
<dbReference type="Gene3D" id="3.50.50.60">
    <property type="entry name" value="FAD/NAD(P)-binding domain"/>
    <property type="match status" value="1"/>
</dbReference>
<dbReference type="InterPro" id="IPR031656">
    <property type="entry name" value="DAO_C"/>
</dbReference>
<dbReference type="InterPro" id="IPR038299">
    <property type="entry name" value="DAO_C_sf"/>
</dbReference>
<dbReference type="InterPro" id="IPR006076">
    <property type="entry name" value="FAD-dep_OxRdtase"/>
</dbReference>
<dbReference type="InterPro" id="IPR036188">
    <property type="entry name" value="FAD/NAD-bd_sf"/>
</dbReference>
<dbReference type="InterPro" id="IPR000447">
    <property type="entry name" value="G3P_DH_FAD-dep"/>
</dbReference>
<dbReference type="PANTHER" id="PTHR11985:SF35">
    <property type="entry name" value="ANAEROBIC GLYCEROL-3-PHOSPHATE DEHYDROGENASE SUBUNIT A"/>
    <property type="match status" value="1"/>
</dbReference>
<dbReference type="PANTHER" id="PTHR11985">
    <property type="entry name" value="GLYCEROL-3-PHOSPHATE DEHYDROGENASE"/>
    <property type="match status" value="1"/>
</dbReference>
<dbReference type="Pfam" id="PF01266">
    <property type="entry name" value="DAO"/>
    <property type="match status" value="1"/>
</dbReference>
<dbReference type="Pfam" id="PF16901">
    <property type="entry name" value="DAO_C"/>
    <property type="match status" value="1"/>
</dbReference>
<dbReference type="PRINTS" id="PR01001">
    <property type="entry name" value="FADG3PDH"/>
</dbReference>
<dbReference type="SUPFAM" id="SSF54373">
    <property type="entry name" value="FAD-linked reductases, C-terminal domain"/>
    <property type="match status" value="1"/>
</dbReference>
<dbReference type="SUPFAM" id="SSF51905">
    <property type="entry name" value="FAD/NAD(P)-binding domain"/>
    <property type="match status" value="1"/>
</dbReference>
<dbReference type="PROSITE" id="PS00977">
    <property type="entry name" value="FAD_G3PDH_1"/>
    <property type="match status" value="1"/>
</dbReference>
<dbReference type="PROSITE" id="PS00978">
    <property type="entry name" value="FAD_G3PDH_2"/>
    <property type="match status" value="1"/>
</dbReference>
<protein>
    <recommendedName>
        <fullName>Aerobic glycerol-3-phosphate dehydrogenase</fullName>
        <ecNumber>1.1.5.3</ecNumber>
    </recommendedName>
</protein>
<gene>
    <name type="primary">glpD</name>
    <name type="ordered locus">SERP0868</name>
</gene>
<reference key="1">
    <citation type="journal article" date="2005" name="J. Bacteriol.">
        <title>Insights on evolution of virulence and resistance from the complete genome analysis of an early methicillin-resistant Staphylococcus aureus strain and a biofilm-producing methicillin-resistant Staphylococcus epidermidis strain.</title>
        <authorList>
            <person name="Gill S.R."/>
            <person name="Fouts D.E."/>
            <person name="Archer G.L."/>
            <person name="Mongodin E.F."/>
            <person name="DeBoy R.T."/>
            <person name="Ravel J."/>
            <person name="Paulsen I.T."/>
            <person name="Kolonay J.F."/>
            <person name="Brinkac L.M."/>
            <person name="Beanan M.J."/>
            <person name="Dodson R.J."/>
            <person name="Daugherty S.C."/>
            <person name="Madupu R."/>
            <person name="Angiuoli S.V."/>
            <person name="Durkin A.S."/>
            <person name="Haft D.H."/>
            <person name="Vamathevan J.J."/>
            <person name="Khouri H."/>
            <person name="Utterback T.R."/>
            <person name="Lee C."/>
            <person name="Dimitrov G."/>
            <person name="Jiang L."/>
            <person name="Qin H."/>
            <person name="Weidman J."/>
            <person name="Tran K."/>
            <person name="Kang K.H."/>
            <person name="Hance I.R."/>
            <person name="Nelson K.E."/>
            <person name="Fraser C.M."/>
        </authorList>
    </citation>
    <scope>NUCLEOTIDE SEQUENCE [LARGE SCALE GENOMIC DNA]</scope>
    <source>
        <strain>ATCC 35984 / DSM 28319 / BCRC 17069 / CCUG 31568 / BM 3577 / RP62A</strain>
    </source>
</reference>
<evidence type="ECO:0000250" key="1"/>
<evidence type="ECO:0000255" key="2"/>
<evidence type="ECO:0000305" key="3"/>
<comment type="catalytic activity">
    <reaction>
        <text>a quinone + sn-glycerol 3-phosphate = dihydroxyacetone phosphate + a quinol</text>
        <dbReference type="Rhea" id="RHEA:18977"/>
        <dbReference type="ChEBI" id="CHEBI:24646"/>
        <dbReference type="ChEBI" id="CHEBI:57597"/>
        <dbReference type="ChEBI" id="CHEBI:57642"/>
        <dbReference type="ChEBI" id="CHEBI:132124"/>
        <dbReference type="EC" id="1.1.5.3"/>
    </reaction>
</comment>
<comment type="cofactor">
    <cofactor evidence="1">
        <name>FAD</name>
        <dbReference type="ChEBI" id="CHEBI:57692"/>
    </cofactor>
</comment>
<comment type="pathway">
    <text>Polyol metabolism; glycerol degradation via glycerol kinase pathway; glycerone phosphate from sn-glycerol 3-phosphate (aerobic route): step 1/1.</text>
</comment>
<comment type="subcellular location">
    <subcellularLocation>
        <location evidence="1">Cytoplasm</location>
    </subcellularLocation>
</comment>
<comment type="similarity">
    <text evidence="3">Belongs to the FAD-dependent glycerol-3-phosphate dehydrogenase family.</text>
</comment>